<reference key="1">
    <citation type="journal article" date="2000" name="Nucleic Acids Res.">
        <title>Complete genome sequence of the alkaliphilic bacterium Bacillus halodurans and genomic sequence comparison with Bacillus subtilis.</title>
        <authorList>
            <person name="Takami H."/>
            <person name="Nakasone K."/>
            <person name="Takaki Y."/>
            <person name="Maeno G."/>
            <person name="Sasaki R."/>
            <person name="Masui N."/>
            <person name="Fuji F."/>
            <person name="Hirama C."/>
            <person name="Nakamura Y."/>
            <person name="Ogasawara N."/>
            <person name="Kuhara S."/>
            <person name="Horikoshi K."/>
        </authorList>
    </citation>
    <scope>NUCLEOTIDE SEQUENCE [LARGE SCALE GENOMIC DNA]</scope>
    <source>
        <strain>ATCC BAA-125 / DSM 18197 / FERM 7344 / JCM 9153 / C-125</strain>
    </source>
</reference>
<comment type="function">
    <text evidence="1">Transcriptional repressor for the ribose rbsDACBK operon.</text>
</comment>
<proteinExistence type="inferred from homology"/>
<organism>
    <name type="scientific">Halalkalibacterium halodurans (strain ATCC BAA-125 / DSM 18197 / FERM 7344 / JCM 9153 / C-125)</name>
    <name type="common">Bacillus halodurans</name>
    <dbReference type="NCBI Taxonomy" id="272558"/>
    <lineage>
        <taxon>Bacteria</taxon>
        <taxon>Bacillati</taxon>
        <taxon>Bacillota</taxon>
        <taxon>Bacilli</taxon>
        <taxon>Bacillales</taxon>
        <taxon>Bacillaceae</taxon>
        <taxon>Halalkalibacterium (ex Joshi et al. 2022)</taxon>
    </lineage>
</organism>
<accession>Q9K6K2</accession>
<evidence type="ECO:0000250" key="1"/>
<evidence type="ECO:0000255" key="2">
    <source>
        <dbReference type="PROSITE-ProRule" id="PRU00111"/>
    </source>
</evidence>
<protein>
    <recommendedName>
        <fullName>Ribose operon repressor</fullName>
    </recommendedName>
</protein>
<keyword id="KW-0238">DNA-binding</keyword>
<keyword id="KW-1185">Reference proteome</keyword>
<keyword id="KW-0678">Repressor</keyword>
<keyword id="KW-0804">Transcription</keyword>
<keyword id="KW-0805">Transcription regulation</keyword>
<feature type="chain" id="PRO_0000107983" description="Ribose operon repressor">
    <location>
        <begin position="1"/>
        <end position="331"/>
    </location>
</feature>
<feature type="domain" description="HTH lacI-type" evidence="2">
    <location>
        <begin position="1"/>
        <end position="56"/>
    </location>
</feature>
<feature type="DNA-binding region" description="H-T-H motif" evidence="2">
    <location>
        <begin position="4"/>
        <end position="23"/>
    </location>
</feature>
<name>RBSR_HALH5</name>
<dbReference type="EMBL" id="BA000004">
    <property type="protein sequence ID" value="BAB07446.1"/>
    <property type="molecule type" value="Genomic_DNA"/>
</dbReference>
<dbReference type="PIR" id="G84115">
    <property type="entry name" value="G84115"/>
</dbReference>
<dbReference type="RefSeq" id="WP_010899852.1">
    <property type="nucleotide sequence ID" value="NC_002570.2"/>
</dbReference>
<dbReference type="SMR" id="Q9K6K2"/>
<dbReference type="STRING" id="272558.gene:10729640"/>
<dbReference type="GeneID" id="87599276"/>
<dbReference type="KEGG" id="bha:BH3727"/>
<dbReference type="eggNOG" id="COG1609">
    <property type="taxonomic scope" value="Bacteria"/>
</dbReference>
<dbReference type="HOGENOM" id="CLU_037628_6_1_9"/>
<dbReference type="OrthoDB" id="9796186at2"/>
<dbReference type="Proteomes" id="UP000001258">
    <property type="component" value="Chromosome"/>
</dbReference>
<dbReference type="GO" id="GO:0003700">
    <property type="term" value="F:DNA-binding transcription factor activity"/>
    <property type="evidence" value="ECO:0007669"/>
    <property type="project" value="TreeGrafter"/>
</dbReference>
<dbReference type="GO" id="GO:0000976">
    <property type="term" value="F:transcription cis-regulatory region binding"/>
    <property type="evidence" value="ECO:0007669"/>
    <property type="project" value="TreeGrafter"/>
</dbReference>
<dbReference type="CDD" id="cd01392">
    <property type="entry name" value="HTH_LacI"/>
    <property type="match status" value="1"/>
</dbReference>
<dbReference type="CDD" id="cd06291">
    <property type="entry name" value="PBP1_Qymf-like"/>
    <property type="match status" value="1"/>
</dbReference>
<dbReference type="Gene3D" id="3.40.50.2300">
    <property type="match status" value="2"/>
</dbReference>
<dbReference type="Gene3D" id="1.10.260.40">
    <property type="entry name" value="lambda repressor-like DNA-binding domains"/>
    <property type="match status" value="1"/>
</dbReference>
<dbReference type="InterPro" id="IPR000843">
    <property type="entry name" value="HTH_LacI"/>
</dbReference>
<dbReference type="InterPro" id="IPR046335">
    <property type="entry name" value="LacI/GalR-like_sensor"/>
</dbReference>
<dbReference type="InterPro" id="IPR010982">
    <property type="entry name" value="Lambda_DNA-bd_dom_sf"/>
</dbReference>
<dbReference type="InterPro" id="IPR028082">
    <property type="entry name" value="Peripla_BP_I"/>
</dbReference>
<dbReference type="PANTHER" id="PTHR30146">
    <property type="entry name" value="LACI-RELATED TRANSCRIPTIONAL REPRESSOR"/>
    <property type="match status" value="1"/>
</dbReference>
<dbReference type="PANTHER" id="PTHR30146:SF95">
    <property type="entry name" value="RIBOSE OPERON REPRESSOR"/>
    <property type="match status" value="1"/>
</dbReference>
<dbReference type="Pfam" id="PF00356">
    <property type="entry name" value="LacI"/>
    <property type="match status" value="1"/>
</dbReference>
<dbReference type="Pfam" id="PF13377">
    <property type="entry name" value="Peripla_BP_3"/>
    <property type="match status" value="1"/>
</dbReference>
<dbReference type="PRINTS" id="PR00036">
    <property type="entry name" value="HTHLACI"/>
</dbReference>
<dbReference type="SMART" id="SM00354">
    <property type="entry name" value="HTH_LACI"/>
    <property type="match status" value="1"/>
</dbReference>
<dbReference type="SUPFAM" id="SSF47413">
    <property type="entry name" value="lambda repressor-like DNA-binding domains"/>
    <property type="match status" value="1"/>
</dbReference>
<dbReference type="SUPFAM" id="SSF53822">
    <property type="entry name" value="Periplasmic binding protein-like I"/>
    <property type="match status" value="1"/>
</dbReference>
<dbReference type="PROSITE" id="PS00356">
    <property type="entry name" value="HTH_LACI_1"/>
    <property type="match status" value="1"/>
</dbReference>
<dbReference type="PROSITE" id="PS50932">
    <property type="entry name" value="HTH_LACI_2"/>
    <property type="match status" value="1"/>
</dbReference>
<sequence length="331" mass="36637">MTTIRDVAKHAKVSVATVSRVLNKKGYVSKEAEEAVLQAIKELNYQPSSVARSLYHKTSGMIGLLIPDISNPFFPELARAVEDVASTYGYTVVLCNTDEEIEKERKYLQALKQKYVDGVILTTSFLPYKEYEQLNIPMVALDRYVNENIPLVASQNKAGARLATEHLLEQGCQFIAHIRGPKGVTPAEDRYEGFKEVVEEQEVANIVVSADFHIDEAQKVTRALLETHPTIDGIFASSDVVAAGAMKAAHMMGKRIPDDLQIVGFDGIPLGNMLVPSLTTVEQPIYDLGAVSTRLLIKQIEKKPLDTYRYEIPTKLVVRETTKGGENSENA</sequence>
<gene>
    <name type="primary">rbsR</name>
    <name type="ordered locus">BH3727</name>
</gene>